<dbReference type="EMBL" id="AE017340">
    <property type="protein sequence ID" value="AAV83081.1"/>
    <property type="molecule type" value="Genomic_DNA"/>
</dbReference>
<dbReference type="RefSeq" id="WP_011235476.1">
    <property type="nucleotide sequence ID" value="NC_006512.1"/>
</dbReference>
<dbReference type="SMR" id="Q5QVQ8"/>
<dbReference type="STRING" id="283942.IL2249"/>
<dbReference type="GeneID" id="41337438"/>
<dbReference type="KEGG" id="ilo:IL2249"/>
<dbReference type="eggNOG" id="COG1489">
    <property type="taxonomic scope" value="Bacteria"/>
</dbReference>
<dbReference type="HOGENOM" id="CLU_052299_2_0_6"/>
<dbReference type="OrthoDB" id="9802365at2"/>
<dbReference type="Proteomes" id="UP000001171">
    <property type="component" value="Chromosome"/>
</dbReference>
<dbReference type="GO" id="GO:0003677">
    <property type="term" value="F:DNA binding"/>
    <property type="evidence" value="ECO:0007669"/>
    <property type="project" value="InterPro"/>
</dbReference>
<dbReference type="CDD" id="cd22359">
    <property type="entry name" value="SfsA-like_bacterial"/>
    <property type="match status" value="1"/>
</dbReference>
<dbReference type="FunFam" id="2.40.50.580:FF:000001">
    <property type="entry name" value="Sugar fermentation stimulation protein A"/>
    <property type="match status" value="1"/>
</dbReference>
<dbReference type="Gene3D" id="2.40.50.580">
    <property type="match status" value="1"/>
</dbReference>
<dbReference type="Gene3D" id="3.40.1350.60">
    <property type="match status" value="1"/>
</dbReference>
<dbReference type="HAMAP" id="MF_00095">
    <property type="entry name" value="SfsA"/>
    <property type="match status" value="1"/>
</dbReference>
<dbReference type="InterPro" id="IPR005224">
    <property type="entry name" value="SfsA"/>
</dbReference>
<dbReference type="InterPro" id="IPR040452">
    <property type="entry name" value="SfsA_C"/>
</dbReference>
<dbReference type="InterPro" id="IPR041465">
    <property type="entry name" value="SfsA_N"/>
</dbReference>
<dbReference type="NCBIfam" id="TIGR00230">
    <property type="entry name" value="sfsA"/>
    <property type="match status" value="1"/>
</dbReference>
<dbReference type="PANTHER" id="PTHR30545">
    <property type="entry name" value="SUGAR FERMENTATION STIMULATION PROTEIN A"/>
    <property type="match status" value="1"/>
</dbReference>
<dbReference type="PANTHER" id="PTHR30545:SF2">
    <property type="entry name" value="SUGAR FERMENTATION STIMULATION PROTEIN A"/>
    <property type="match status" value="1"/>
</dbReference>
<dbReference type="Pfam" id="PF03749">
    <property type="entry name" value="SfsA"/>
    <property type="match status" value="1"/>
</dbReference>
<dbReference type="Pfam" id="PF17746">
    <property type="entry name" value="SfsA_N"/>
    <property type="match status" value="1"/>
</dbReference>
<protein>
    <recommendedName>
        <fullName evidence="1">Sugar fermentation stimulation protein homolog</fullName>
    </recommendedName>
</protein>
<name>SFSA_IDILO</name>
<evidence type="ECO:0000255" key="1">
    <source>
        <dbReference type="HAMAP-Rule" id="MF_00095"/>
    </source>
</evidence>
<gene>
    <name evidence="1" type="primary">sfsA</name>
    <name type="ordered locus">IL2249</name>
</gene>
<sequence length="234" mass="26538">MQFNKPLRQGVLQKRYKRFLADIDFGDNETTTTHCPNTGAMTGCAEPGFTAWCSVSDNPKRKYSLTWELAQNNNGEMIVVNTQHANRMAGELLQTNLVPELSQWQELKPEQRYGKEKSRIDWWGVDQHNRECFIEVKSVTLADASQGYFPDAVSQRAHKHLNELMQVVADGHRAVQLYMVMHDGIERVSPAAHIDSQYAELCRKAASVGVEFYAVKCRASAKEIKLERPVPVSL</sequence>
<keyword id="KW-1185">Reference proteome</keyword>
<proteinExistence type="inferred from homology"/>
<comment type="similarity">
    <text evidence="1">Belongs to the SfsA family.</text>
</comment>
<organism>
    <name type="scientific">Idiomarina loihiensis (strain ATCC BAA-735 / DSM 15497 / L2-TR)</name>
    <dbReference type="NCBI Taxonomy" id="283942"/>
    <lineage>
        <taxon>Bacteria</taxon>
        <taxon>Pseudomonadati</taxon>
        <taxon>Pseudomonadota</taxon>
        <taxon>Gammaproteobacteria</taxon>
        <taxon>Alteromonadales</taxon>
        <taxon>Idiomarinaceae</taxon>
        <taxon>Idiomarina</taxon>
    </lineage>
</organism>
<feature type="chain" id="PRO_0000152290" description="Sugar fermentation stimulation protein homolog">
    <location>
        <begin position="1"/>
        <end position="234"/>
    </location>
</feature>
<accession>Q5QVQ8</accession>
<reference key="1">
    <citation type="journal article" date="2004" name="Proc. Natl. Acad. Sci. U.S.A.">
        <title>Genome sequence of the deep-sea gamma-proteobacterium Idiomarina loihiensis reveals amino acid fermentation as a source of carbon and energy.</title>
        <authorList>
            <person name="Hou S."/>
            <person name="Saw J.H."/>
            <person name="Lee K.S."/>
            <person name="Freitas T.A."/>
            <person name="Belisle C."/>
            <person name="Kawarabayasi Y."/>
            <person name="Donachie S.P."/>
            <person name="Pikina A."/>
            <person name="Galperin M.Y."/>
            <person name="Koonin E.V."/>
            <person name="Makarova K.S."/>
            <person name="Omelchenko M.V."/>
            <person name="Sorokin A."/>
            <person name="Wolf Y.I."/>
            <person name="Li Q.X."/>
            <person name="Keum Y.S."/>
            <person name="Campbell S."/>
            <person name="Denery J."/>
            <person name="Aizawa S."/>
            <person name="Shibata S."/>
            <person name="Malahoff A."/>
            <person name="Alam M."/>
        </authorList>
    </citation>
    <scope>NUCLEOTIDE SEQUENCE [LARGE SCALE GENOMIC DNA]</scope>
    <source>
        <strain>ATCC BAA-735 / DSM 15497 / L2-TR</strain>
    </source>
</reference>